<feature type="chain" id="PRO_0000392766" description="Dermonecrotic toxin LapSicTox-alphaIB1aii">
    <location>
        <begin position="1" status="less than"/>
        <end position="273"/>
    </location>
</feature>
<feature type="active site" evidence="5">
    <location>
        <position position="5"/>
    </location>
</feature>
<feature type="active site" description="Nucleophile" evidence="5">
    <location>
        <position position="41"/>
    </location>
</feature>
<feature type="binding site" evidence="5">
    <location>
        <position position="25"/>
    </location>
    <ligand>
        <name>Mg(2+)</name>
        <dbReference type="ChEBI" id="CHEBI:18420"/>
    </ligand>
</feature>
<feature type="binding site" evidence="5">
    <location>
        <position position="27"/>
    </location>
    <ligand>
        <name>Mg(2+)</name>
        <dbReference type="ChEBI" id="CHEBI:18420"/>
    </ligand>
</feature>
<feature type="binding site" evidence="5">
    <location>
        <position position="85"/>
    </location>
    <ligand>
        <name>Mg(2+)</name>
        <dbReference type="ChEBI" id="CHEBI:18420"/>
    </ligand>
</feature>
<feature type="glycosylation site" description="N-linked (GlcNAc...) asparagine" evidence="6">
    <location>
        <position position="250"/>
    </location>
</feature>
<feature type="disulfide bond" evidence="3">
    <location>
        <begin position="45"/>
        <end position="51"/>
    </location>
</feature>
<feature type="disulfide bond" evidence="3">
    <location>
        <begin position="47"/>
        <end position="190"/>
    </location>
</feature>
<feature type="non-terminal residue">
    <location>
        <position position="1"/>
    </location>
</feature>
<name>A1KA2_LOXAP</name>
<comment type="function">
    <text evidence="1 3">Dermonecrotic toxins cleave the phosphodiester linkage between the phosphate and headgroup of certain phospholipids (sphingolipid and lysolipid substrates), forming an alcohol (often choline) and a cyclic phosphate (By similarity). This toxin acts on sphingomyelin (SM) (By similarity). It may also act on ceramide phosphoethanolamine (CPE), lysophosphatidylcholine (LPC) and lysophosphatidylethanolamine (LPE), but not on lysophosphatidylserine (LPS), and lysophosphatidylglycerol (LPG) (By similarity). It acts by transphosphatidylation, releasing exclusively cyclic phosphate products as second products (By similarity). Induces dermonecrosis, hemolysis, increased vascular permeability, edema, inflammatory response, and platelet aggregation (By similarity).</text>
</comment>
<comment type="catalytic activity">
    <reaction evidence="1">
        <text>an N-(acyl)-sphingosylphosphocholine = an N-(acyl)-sphingosyl-1,3-cyclic phosphate + choline</text>
        <dbReference type="Rhea" id="RHEA:60652"/>
        <dbReference type="ChEBI" id="CHEBI:15354"/>
        <dbReference type="ChEBI" id="CHEBI:64583"/>
        <dbReference type="ChEBI" id="CHEBI:143892"/>
    </reaction>
</comment>
<comment type="catalytic activity">
    <reaction evidence="1">
        <text>an N-(acyl)-sphingosylphosphoethanolamine = an N-(acyl)-sphingosyl-1,3-cyclic phosphate + ethanolamine</text>
        <dbReference type="Rhea" id="RHEA:60648"/>
        <dbReference type="ChEBI" id="CHEBI:57603"/>
        <dbReference type="ChEBI" id="CHEBI:143891"/>
        <dbReference type="ChEBI" id="CHEBI:143892"/>
    </reaction>
</comment>
<comment type="catalytic activity">
    <reaction evidence="1">
        <text>a 1-acyl-sn-glycero-3-phosphocholine = a 1-acyl-sn-glycero-2,3-cyclic phosphate + choline</text>
        <dbReference type="Rhea" id="RHEA:60700"/>
        <dbReference type="ChEBI" id="CHEBI:15354"/>
        <dbReference type="ChEBI" id="CHEBI:58168"/>
        <dbReference type="ChEBI" id="CHEBI:143947"/>
    </reaction>
</comment>
<comment type="catalytic activity">
    <reaction evidence="1">
        <text>a 1-acyl-sn-glycero-3-phosphoethanolamine = a 1-acyl-sn-glycero-2,3-cyclic phosphate + ethanolamine</text>
        <dbReference type="Rhea" id="RHEA:60704"/>
        <dbReference type="ChEBI" id="CHEBI:57603"/>
        <dbReference type="ChEBI" id="CHEBI:64381"/>
        <dbReference type="ChEBI" id="CHEBI:143947"/>
    </reaction>
</comment>
<comment type="cofactor">
    <cofactor evidence="5">
        <name>Mg(2+)</name>
        <dbReference type="ChEBI" id="CHEBI:18420"/>
    </cofactor>
    <text evidence="5">Binds 1 Mg(2+) ion per subunit.</text>
</comment>
<comment type="subcellular location">
    <subcellularLocation>
        <location evidence="9">Secreted</location>
    </subcellularLocation>
</comment>
<comment type="tissue specificity">
    <text evidence="9">Expressed by the venom gland.</text>
</comment>
<comment type="similarity">
    <text evidence="8">Belongs to the arthropod phospholipase D family. Class II subfamily.</text>
</comment>
<comment type="caution">
    <text evidence="1 2 4">The most common activity assay for dermonecrotic toxins detects enzymatic activity by monitoring choline release from substrate. Liberation of choline from sphingomyelin (SM) or lysophosphatidylcholine (LPC) is commonly assumed to result from substrate hydrolysis, giving either ceramide-1-phosphate (C1P) or lysophosphatidic acid (LPA), respectively, as a second product. However, two studies from Lajoie and colleagues (2013 and 2015) report the observation of exclusive formation of cyclic phosphate products as second products, resulting from intramolecular transphosphatidylation. Cyclic phosphates have vastly different biological properties from their monoester counterparts, and they may be relevant to the pathology of brown spider envenomation.</text>
</comment>
<dbReference type="EC" id="4.6.1.-" evidence="4"/>
<dbReference type="EMBL" id="FJ171389">
    <property type="protein sequence ID" value="ACN48885.1"/>
    <property type="molecule type" value="mRNA"/>
</dbReference>
<dbReference type="SMR" id="C0JAV4"/>
<dbReference type="GO" id="GO:0005576">
    <property type="term" value="C:extracellular region"/>
    <property type="evidence" value="ECO:0007669"/>
    <property type="project" value="UniProtKB-SubCell"/>
</dbReference>
<dbReference type="GO" id="GO:0016829">
    <property type="term" value="F:lyase activity"/>
    <property type="evidence" value="ECO:0007669"/>
    <property type="project" value="UniProtKB-KW"/>
</dbReference>
<dbReference type="GO" id="GO:0046872">
    <property type="term" value="F:metal ion binding"/>
    <property type="evidence" value="ECO:0007669"/>
    <property type="project" value="UniProtKB-KW"/>
</dbReference>
<dbReference type="GO" id="GO:0008081">
    <property type="term" value="F:phosphoric diester hydrolase activity"/>
    <property type="evidence" value="ECO:0007669"/>
    <property type="project" value="InterPro"/>
</dbReference>
<dbReference type="GO" id="GO:0090729">
    <property type="term" value="F:toxin activity"/>
    <property type="evidence" value="ECO:0007669"/>
    <property type="project" value="UniProtKB-KW"/>
</dbReference>
<dbReference type="GO" id="GO:0031640">
    <property type="term" value="P:killing of cells of another organism"/>
    <property type="evidence" value="ECO:0007669"/>
    <property type="project" value="UniProtKB-KW"/>
</dbReference>
<dbReference type="GO" id="GO:0016042">
    <property type="term" value="P:lipid catabolic process"/>
    <property type="evidence" value="ECO:0007669"/>
    <property type="project" value="UniProtKB-KW"/>
</dbReference>
<dbReference type="CDD" id="cd08576">
    <property type="entry name" value="GDPD_like_SMaseD_PLD"/>
    <property type="match status" value="1"/>
</dbReference>
<dbReference type="Gene3D" id="3.20.20.190">
    <property type="entry name" value="Phosphatidylinositol (PI) phosphodiesterase"/>
    <property type="match status" value="1"/>
</dbReference>
<dbReference type="InterPro" id="IPR017946">
    <property type="entry name" value="PLC-like_Pdiesterase_TIM-brl"/>
</dbReference>
<dbReference type="SUPFAM" id="SSF51695">
    <property type="entry name" value="PLC-like phosphodiesterases"/>
    <property type="match status" value="1"/>
</dbReference>
<evidence type="ECO:0000250" key="1">
    <source>
        <dbReference type="UniProtKB" id="A0A0D4WTV1"/>
    </source>
</evidence>
<evidence type="ECO:0000250" key="2">
    <source>
        <dbReference type="UniProtKB" id="A0A0D4WV12"/>
    </source>
</evidence>
<evidence type="ECO:0000250" key="3">
    <source>
        <dbReference type="UniProtKB" id="P0CE80"/>
    </source>
</evidence>
<evidence type="ECO:0000250" key="4">
    <source>
        <dbReference type="UniProtKB" id="Q4ZFU2"/>
    </source>
</evidence>
<evidence type="ECO:0000250" key="5">
    <source>
        <dbReference type="UniProtKB" id="Q8I914"/>
    </source>
</evidence>
<evidence type="ECO:0000255" key="6"/>
<evidence type="ECO:0000303" key="7">
    <source>
    </source>
</evidence>
<evidence type="ECO:0000305" key="8"/>
<evidence type="ECO:0000305" key="9">
    <source>
    </source>
</evidence>
<proteinExistence type="evidence at transcript level"/>
<organism>
    <name type="scientific">Loxosceles apachea</name>
    <name type="common">Apache recluse spider</name>
    <dbReference type="NCBI Taxonomy" id="571518"/>
    <lineage>
        <taxon>Eukaryota</taxon>
        <taxon>Metazoa</taxon>
        <taxon>Ecdysozoa</taxon>
        <taxon>Arthropoda</taxon>
        <taxon>Chelicerata</taxon>
        <taxon>Arachnida</taxon>
        <taxon>Araneae</taxon>
        <taxon>Araneomorphae</taxon>
        <taxon>Haplogynae</taxon>
        <taxon>Scytodoidea</taxon>
        <taxon>Sicariidae</taxon>
        <taxon>Loxosceles</taxon>
    </lineage>
</organism>
<reference key="1">
    <citation type="journal article" date="2009" name="Mol. Biol. Evol.">
        <title>Molecular evolution, functional variation, and proposed nomenclature of the gene family that includes sphingomyelinase D in sicariid spider venoms.</title>
        <authorList>
            <person name="Binford G.J."/>
            <person name="Bodner M.R."/>
            <person name="Cordes M.H."/>
            <person name="Baldwin K.L."/>
            <person name="Rynerson M.R."/>
            <person name="Burns S.N."/>
            <person name="Zobel-Thropp P.A."/>
        </authorList>
    </citation>
    <scope>NUCLEOTIDE SEQUENCE [MRNA]</scope>
    <scope>NOMENCLATURE</scope>
    <source>
        <tissue>Venom gland</tissue>
    </source>
</reference>
<accession>C0JAV4</accession>
<protein>
    <recommendedName>
        <fullName evidence="7">Dermonecrotic toxin LapSicTox-alphaIB1aii</fullName>
        <ecNumber evidence="4">4.6.1.-</ecNumber>
    </recommendedName>
    <alternativeName>
        <fullName>Phospholipase D</fullName>
        <shortName>PLD</shortName>
    </alternativeName>
    <alternativeName>
        <fullName>Sphingomyelin phosphodiesterase D</fullName>
        <shortName>SMD</shortName>
        <shortName>SMase D</shortName>
        <shortName>Sphingomyelinase D</shortName>
    </alternativeName>
</protein>
<keyword id="KW-0204">Cytolysis</keyword>
<keyword id="KW-1061">Dermonecrotic toxin</keyword>
<keyword id="KW-1015">Disulfide bond</keyword>
<keyword id="KW-0325">Glycoprotein</keyword>
<keyword id="KW-0354">Hemolysis</keyword>
<keyword id="KW-0442">Lipid degradation</keyword>
<keyword id="KW-0443">Lipid metabolism</keyword>
<keyword id="KW-0456">Lyase</keyword>
<keyword id="KW-0460">Magnesium</keyword>
<keyword id="KW-0479">Metal-binding</keyword>
<keyword id="KW-0964">Secreted</keyword>
<keyword id="KW-0800">Toxin</keyword>
<sequence>WIMGHMVNAIAQIDEFVNLGANSIETDVSFDSSANPEYTYHGVPCDCGRTCTKWEHFNEFLKGLRKATTPGDSKYHEKLVLVVFDLKTGSLYDNQASDAGKKLAKSLLQNYWNNGNNGGRAYIVLSIPNLAHYKLITGFKEALTSEGHPELMDKVGYDFSGNDDIGDVANAYKKAGVTGHVWQSDGITNCLLRGLDRVRKAVANRDSSSGYINKVHYWTVDKRQSTRDALDAGVDGIMTNYPDVIADVLNESAYKAKFRIASYDDNPWETFKN</sequence>